<sequence>MSESIERNRRHVYQGRVVSDKMDKTIVVVVDTYKNHPVYSKRTRYSKKYYAMDENNEAKVGDIVRIMETRPLSRTKRFRLVDIVKKSV</sequence>
<organism>
    <name type="scientific">Lactobacillus delbrueckii subsp. bulgaricus (strain ATCC 11842 / DSM 20081 / BCRC 10696 / JCM 1002 / NBRC 13953 / NCIMB 11778 / NCTC 12712 / WDCM 00102 / Lb 14)</name>
    <dbReference type="NCBI Taxonomy" id="390333"/>
    <lineage>
        <taxon>Bacteria</taxon>
        <taxon>Bacillati</taxon>
        <taxon>Bacillota</taxon>
        <taxon>Bacilli</taxon>
        <taxon>Lactobacillales</taxon>
        <taxon>Lactobacillaceae</taxon>
        <taxon>Lactobacillus</taxon>
    </lineage>
</organism>
<name>RS17_LACDA</name>
<accession>Q1GBK9</accession>
<dbReference type="EMBL" id="CR954253">
    <property type="protein sequence ID" value="CAI97240.1"/>
    <property type="molecule type" value="Genomic_DNA"/>
</dbReference>
<dbReference type="RefSeq" id="WP_002878196.1">
    <property type="nucleotide sequence ID" value="NZ_JQAV01000001.1"/>
</dbReference>
<dbReference type="SMR" id="Q1GBK9"/>
<dbReference type="STRING" id="390333.Ldb0405"/>
<dbReference type="GeneID" id="69668435"/>
<dbReference type="KEGG" id="ldb:Ldb0405"/>
<dbReference type="PATRIC" id="fig|390333.13.peg.385"/>
<dbReference type="eggNOG" id="COG0186">
    <property type="taxonomic scope" value="Bacteria"/>
</dbReference>
<dbReference type="HOGENOM" id="CLU_073626_1_0_9"/>
<dbReference type="BioCyc" id="LDEL390333:LDB_RS01720-MONOMER"/>
<dbReference type="Proteomes" id="UP000001259">
    <property type="component" value="Chromosome"/>
</dbReference>
<dbReference type="GO" id="GO:0022627">
    <property type="term" value="C:cytosolic small ribosomal subunit"/>
    <property type="evidence" value="ECO:0007669"/>
    <property type="project" value="TreeGrafter"/>
</dbReference>
<dbReference type="GO" id="GO:0019843">
    <property type="term" value="F:rRNA binding"/>
    <property type="evidence" value="ECO:0007669"/>
    <property type="project" value="UniProtKB-UniRule"/>
</dbReference>
<dbReference type="GO" id="GO:0003735">
    <property type="term" value="F:structural constituent of ribosome"/>
    <property type="evidence" value="ECO:0007669"/>
    <property type="project" value="InterPro"/>
</dbReference>
<dbReference type="GO" id="GO:0006412">
    <property type="term" value="P:translation"/>
    <property type="evidence" value="ECO:0007669"/>
    <property type="project" value="UniProtKB-UniRule"/>
</dbReference>
<dbReference type="CDD" id="cd00364">
    <property type="entry name" value="Ribosomal_uS17"/>
    <property type="match status" value="1"/>
</dbReference>
<dbReference type="Gene3D" id="2.40.50.140">
    <property type="entry name" value="Nucleic acid-binding proteins"/>
    <property type="match status" value="1"/>
</dbReference>
<dbReference type="HAMAP" id="MF_01345_B">
    <property type="entry name" value="Ribosomal_uS17_B"/>
    <property type="match status" value="1"/>
</dbReference>
<dbReference type="InterPro" id="IPR012340">
    <property type="entry name" value="NA-bd_OB-fold"/>
</dbReference>
<dbReference type="InterPro" id="IPR000266">
    <property type="entry name" value="Ribosomal_uS17"/>
</dbReference>
<dbReference type="InterPro" id="IPR019984">
    <property type="entry name" value="Ribosomal_uS17_bact/chlr"/>
</dbReference>
<dbReference type="InterPro" id="IPR019979">
    <property type="entry name" value="Ribosomal_uS17_CS"/>
</dbReference>
<dbReference type="NCBIfam" id="NF004123">
    <property type="entry name" value="PRK05610.1"/>
    <property type="match status" value="1"/>
</dbReference>
<dbReference type="NCBIfam" id="TIGR03635">
    <property type="entry name" value="uS17_bact"/>
    <property type="match status" value="1"/>
</dbReference>
<dbReference type="PANTHER" id="PTHR10744">
    <property type="entry name" value="40S RIBOSOMAL PROTEIN S11 FAMILY MEMBER"/>
    <property type="match status" value="1"/>
</dbReference>
<dbReference type="PANTHER" id="PTHR10744:SF1">
    <property type="entry name" value="SMALL RIBOSOMAL SUBUNIT PROTEIN US17M"/>
    <property type="match status" value="1"/>
</dbReference>
<dbReference type="Pfam" id="PF00366">
    <property type="entry name" value="Ribosomal_S17"/>
    <property type="match status" value="1"/>
</dbReference>
<dbReference type="PRINTS" id="PR00973">
    <property type="entry name" value="RIBOSOMALS17"/>
</dbReference>
<dbReference type="SUPFAM" id="SSF50249">
    <property type="entry name" value="Nucleic acid-binding proteins"/>
    <property type="match status" value="1"/>
</dbReference>
<dbReference type="PROSITE" id="PS00056">
    <property type="entry name" value="RIBOSOMAL_S17"/>
    <property type="match status" value="1"/>
</dbReference>
<protein>
    <recommendedName>
        <fullName evidence="1">Small ribosomal subunit protein uS17</fullName>
    </recommendedName>
    <alternativeName>
        <fullName evidence="2">30S ribosomal protein S17</fullName>
    </alternativeName>
</protein>
<comment type="function">
    <text evidence="1">One of the primary rRNA binding proteins, it binds specifically to the 5'-end of 16S ribosomal RNA.</text>
</comment>
<comment type="subunit">
    <text evidence="1">Part of the 30S ribosomal subunit.</text>
</comment>
<comment type="similarity">
    <text evidence="1">Belongs to the universal ribosomal protein uS17 family.</text>
</comment>
<reference key="1">
    <citation type="journal article" date="2006" name="Proc. Natl. Acad. Sci. U.S.A.">
        <title>The complete genome sequence of Lactobacillus bulgaricus reveals extensive and ongoing reductive evolution.</title>
        <authorList>
            <person name="van de Guchte M."/>
            <person name="Penaud S."/>
            <person name="Grimaldi C."/>
            <person name="Barbe V."/>
            <person name="Bryson K."/>
            <person name="Nicolas P."/>
            <person name="Robert C."/>
            <person name="Oztas S."/>
            <person name="Mangenot S."/>
            <person name="Couloux A."/>
            <person name="Loux V."/>
            <person name="Dervyn R."/>
            <person name="Bossy R."/>
            <person name="Bolotin A."/>
            <person name="Batto J.-M."/>
            <person name="Walunas T."/>
            <person name="Gibrat J.-F."/>
            <person name="Bessieres P."/>
            <person name="Weissenbach J."/>
            <person name="Ehrlich S.D."/>
            <person name="Maguin E."/>
        </authorList>
    </citation>
    <scope>NUCLEOTIDE SEQUENCE [LARGE SCALE GENOMIC DNA]</scope>
    <source>
        <strain>ATCC 11842 / DSM 20081 / BCRC 10696 / JCM 1002 / NBRC 13953 / NCIMB 11778 / NCTC 12712 / WDCM 00102 / Lb 14</strain>
    </source>
</reference>
<feature type="chain" id="PRO_0000255682" description="Small ribosomal subunit protein uS17">
    <location>
        <begin position="1"/>
        <end position="88"/>
    </location>
</feature>
<keyword id="KW-1185">Reference proteome</keyword>
<keyword id="KW-0687">Ribonucleoprotein</keyword>
<keyword id="KW-0689">Ribosomal protein</keyword>
<keyword id="KW-0694">RNA-binding</keyword>
<keyword id="KW-0699">rRNA-binding</keyword>
<proteinExistence type="inferred from homology"/>
<evidence type="ECO:0000255" key="1">
    <source>
        <dbReference type="HAMAP-Rule" id="MF_01345"/>
    </source>
</evidence>
<evidence type="ECO:0000305" key="2"/>
<gene>
    <name evidence="1" type="primary">rpsQ</name>
    <name type="ordered locus">Ldb0405</name>
</gene>